<proteinExistence type="inferred from homology"/>
<reference key="1">
    <citation type="journal article" date="1998" name="DNA Res.">
        <title>Complete sequence and gene organization of the genome of a hyper-thermophilic archaebacterium, Pyrococcus horikoshii OT3.</title>
        <authorList>
            <person name="Kawarabayasi Y."/>
            <person name="Sawada M."/>
            <person name="Horikawa H."/>
            <person name="Haikawa Y."/>
            <person name="Hino Y."/>
            <person name="Yamamoto S."/>
            <person name="Sekine M."/>
            <person name="Baba S."/>
            <person name="Kosugi H."/>
            <person name="Hosoyama A."/>
            <person name="Nagai Y."/>
            <person name="Sakai M."/>
            <person name="Ogura K."/>
            <person name="Otsuka R."/>
            <person name="Nakazawa H."/>
            <person name="Takamiya M."/>
            <person name="Ohfuku Y."/>
            <person name="Funahashi T."/>
            <person name="Tanaka T."/>
            <person name="Kudoh Y."/>
            <person name="Yamazaki J."/>
            <person name="Kushida N."/>
            <person name="Oguchi A."/>
            <person name="Aoki K."/>
            <person name="Yoshizawa T."/>
            <person name="Nakamura Y."/>
            <person name="Robb F.T."/>
            <person name="Horikoshi K."/>
            <person name="Masuchi Y."/>
            <person name="Shizuya H."/>
            <person name="Kikuchi H."/>
        </authorList>
    </citation>
    <scope>NUCLEOTIDE SEQUENCE [LARGE SCALE GENOMIC DNA]</scope>
    <source>
        <strain>ATCC 700860 / DSM 12428 / JCM 9974 / NBRC 100139 / OT-3</strain>
    </source>
</reference>
<name>FLAB4_PYRHO</name>
<dbReference type="EMBL" id="BA000001">
    <property type="protein sequence ID" value="BAA29639.1"/>
    <property type="molecule type" value="Genomic_DNA"/>
</dbReference>
<dbReference type="PIR" id="B71169">
    <property type="entry name" value="B71169"/>
</dbReference>
<dbReference type="RefSeq" id="WP_010884651.1">
    <property type="nucleotide sequence ID" value="NC_000961.1"/>
</dbReference>
<dbReference type="SMR" id="O58285"/>
<dbReference type="STRING" id="70601.gene:9377487"/>
<dbReference type="EnsemblBacteria" id="BAA29639">
    <property type="protein sequence ID" value="BAA29639"/>
    <property type="gene ID" value="BAA29639"/>
</dbReference>
<dbReference type="GeneID" id="1444438"/>
<dbReference type="KEGG" id="pho:PH0550"/>
<dbReference type="eggNOG" id="arCOG01829">
    <property type="taxonomic scope" value="Archaea"/>
</dbReference>
<dbReference type="OrthoDB" id="102632at2157"/>
<dbReference type="Proteomes" id="UP000000752">
    <property type="component" value="Chromosome"/>
</dbReference>
<dbReference type="GO" id="GO:0097589">
    <property type="term" value="C:archaeal-type flagellum"/>
    <property type="evidence" value="ECO:0007669"/>
    <property type="project" value="UniProtKB-SubCell"/>
</dbReference>
<dbReference type="GO" id="GO:0005198">
    <property type="term" value="F:structural molecule activity"/>
    <property type="evidence" value="ECO:0007669"/>
    <property type="project" value="InterPro"/>
</dbReference>
<dbReference type="GO" id="GO:0097588">
    <property type="term" value="P:archaeal or bacterial-type flagellum-dependent cell motility"/>
    <property type="evidence" value="ECO:0007669"/>
    <property type="project" value="InterPro"/>
</dbReference>
<dbReference type="InterPro" id="IPR013373">
    <property type="entry name" value="Flagellin/pilin_N_arc"/>
</dbReference>
<dbReference type="InterPro" id="IPR002774">
    <property type="entry name" value="Flagellin_arc"/>
</dbReference>
<dbReference type="NCBIfam" id="TIGR02537">
    <property type="entry name" value="arch_flag_Nterm"/>
    <property type="match status" value="1"/>
</dbReference>
<dbReference type="NCBIfam" id="NF006325">
    <property type="entry name" value="PRK08541.1"/>
    <property type="match status" value="1"/>
</dbReference>
<dbReference type="PANTHER" id="PTHR35903">
    <property type="entry name" value="FLAGELLIN B1"/>
    <property type="match status" value="1"/>
</dbReference>
<dbReference type="PANTHER" id="PTHR35903:SF1">
    <property type="entry name" value="FLAGELLIN B1"/>
    <property type="match status" value="1"/>
</dbReference>
<dbReference type="Pfam" id="PF01917">
    <property type="entry name" value="Arch_flagellin"/>
    <property type="match status" value="1"/>
</dbReference>
<comment type="function">
    <text evidence="1">Flagellin is the subunit protein which polymerizes to form the filaments of archaeal flagella.</text>
</comment>
<comment type="subcellular location">
    <subcellularLocation>
        <location evidence="1">Archaeal flagellum</location>
    </subcellularLocation>
</comment>
<comment type="similarity">
    <text evidence="2">Belongs to the archaeal flagellin family.</text>
</comment>
<protein>
    <recommendedName>
        <fullName>Flagellin B4</fullName>
    </recommendedName>
</protein>
<sequence length="214" mass="22414">MRKGAIGIGTLIVFIAMVLVAAVAAGVIIGTAGYLQQKAQAAGRQTTQEVASGIKIVNVFGYINATPPSNGTIVKMAILVTPNAGSSGIDLSNVKIVLSDGKRLAVYNYSGVLYTGKILDLFNLTIWKNTSNGTFSIAVVNDVGSKMENHHPTLEWGDTVALLLRTDDVFEYEGKGGIGPSTKIIGKVIPDAGAAGVIDFTTPPTFGYNVLELQ</sequence>
<accession>O58285</accession>
<feature type="propeptide" id="PRO_0000009405" evidence="1">
    <location>
        <begin position="1"/>
        <end position="4"/>
    </location>
</feature>
<feature type="chain" id="PRO_0000009406" description="Flagellin B4">
    <location>
        <begin position="5"/>
        <end position="214"/>
    </location>
</feature>
<gene>
    <name type="primary">flaB4</name>
    <name type="ordered locus">PH0550</name>
</gene>
<organism>
    <name type="scientific">Pyrococcus horikoshii (strain ATCC 700860 / DSM 12428 / JCM 9974 / NBRC 100139 / OT-3)</name>
    <dbReference type="NCBI Taxonomy" id="70601"/>
    <lineage>
        <taxon>Archaea</taxon>
        <taxon>Methanobacteriati</taxon>
        <taxon>Methanobacteriota</taxon>
        <taxon>Thermococci</taxon>
        <taxon>Thermococcales</taxon>
        <taxon>Thermococcaceae</taxon>
        <taxon>Pyrococcus</taxon>
    </lineage>
</organism>
<evidence type="ECO:0000250" key="1"/>
<evidence type="ECO:0000305" key="2"/>
<keyword id="KW-0974">Archaeal flagellum</keyword>